<evidence type="ECO:0000255" key="1">
    <source>
        <dbReference type="HAMAP-Rule" id="MF_00797"/>
    </source>
</evidence>
<proteinExistence type="inferred from homology"/>
<organism>
    <name type="scientific">Brucella ovis (strain ATCC 25840 / 63/290 / NCTC 10512)</name>
    <dbReference type="NCBI Taxonomy" id="444178"/>
    <lineage>
        <taxon>Bacteria</taxon>
        <taxon>Pseudomonadati</taxon>
        <taxon>Pseudomonadota</taxon>
        <taxon>Alphaproteobacteria</taxon>
        <taxon>Hyphomicrobiales</taxon>
        <taxon>Brucellaceae</taxon>
        <taxon>Brucella/Ochrobactrum group</taxon>
        <taxon>Brucella</taxon>
    </lineage>
</organism>
<comment type="similarity">
    <text evidence="1">Belongs to the UPF0335 family.</text>
</comment>
<gene>
    <name type="ordered locus">BOV_1691</name>
</gene>
<name>Y1691_BRUO2</name>
<dbReference type="EMBL" id="CP000708">
    <property type="protein sequence ID" value="ABQ60705.1"/>
    <property type="molecule type" value="Genomic_DNA"/>
</dbReference>
<dbReference type="RefSeq" id="WP_002964837.1">
    <property type="nucleotide sequence ID" value="NC_009505.1"/>
</dbReference>
<dbReference type="SMR" id="A5VSA3"/>
<dbReference type="KEGG" id="bov:BOV_1691"/>
<dbReference type="HOGENOM" id="CLU_158651_3_0_5"/>
<dbReference type="Proteomes" id="UP000006383">
    <property type="component" value="Chromosome I"/>
</dbReference>
<dbReference type="GO" id="GO:0003677">
    <property type="term" value="F:DNA binding"/>
    <property type="evidence" value="ECO:0007669"/>
    <property type="project" value="InterPro"/>
</dbReference>
<dbReference type="HAMAP" id="MF_00797">
    <property type="entry name" value="UPF0335"/>
    <property type="match status" value="1"/>
</dbReference>
<dbReference type="InterPro" id="IPR018753">
    <property type="entry name" value="GapR-like"/>
</dbReference>
<dbReference type="InterPro" id="IPR046367">
    <property type="entry name" value="GapR-like_DNA-bd"/>
</dbReference>
<dbReference type="NCBIfam" id="NF010247">
    <property type="entry name" value="PRK13694.1"/>
    <property type="match status" value="1"/>
</dbReference>
<dbReference type="Pfam" id="PF10073">
    <property type="entry name" value="GapR_DNA-bd"/>
    <property type="match status" value="1"/>
</dbReference>
<protein>
    <recommendedName>
        <fullName evidence="1">UPF0335 protein BOV_1691</fullName>
    </recommendedName>
</protein>
<sequence length="86" mass="9933">MSDDITSEAQTIAVGQLRAFIERIERLEEEKKTIGDDIKEVYAELKGSGFDSKVVRTIIRLRKKEDHERQEEEAMLQLYMDALGMS</sequence>
<reference key="1">
    <citation type="journal article" date="2009" name="PLoS ONE">
        <title>Genome degradation in Brucella ovis corresponds with narrowing of its host range and tissue tropism.</title>
        <authorList>
            <person name="Tsolis R.M."/>
            <person name="Seshadri R."/>
            <person name="Santos R.L."/>
            <person name="Sangari F.J."/>
            <person name="Lobo J.M."/>
            <person name="de Jong M.F."/>
            <person name="Ren Q."/>
            <person name="Myers G."/>
            <person name="Brinkac L.M."/>
            <person name="Nelson W.C."/>
            <person name="Deboy R.T."/>
            <person name="Angiuoli S."/>
            <person name="Khouri H."/>
            <person name="Dimitrov G."/>
            <person name="Robinson J.R."/>
            <person name="Mulligan S."/>
            <person name="Walker R.L."/>
            <person name="Elzer P.E."/>
            <person name="Hassan K.A."/>
            <person name="Paulsen I.T."/>
        </authorList>
    </citation>
    <scope>NUCLEOTIDE SEQUENCE [LARGE SCALE GENOMIC DNA]</scope>
    <source>
        <strain>ATCC 25840 / 63/290 / NCTC 10512</strain>
    </source>
</reference>
<accession>A5VSA3</accession>
<feature type="chain" id="PRO_1000046959" description="UPF0335 protein BOV_1691">
    <location>
        <begin position="1"/>
        <end position="86"/>
    </location>
</feature>